<keyword id="KW-0270">Exopolysaccharide synthesis</keyword>
<keyword id="KW-0328">Glycosyltransferase</keyword>
<keyword id="KW-1185">Reference proteome</keyword>
<keyword id="KW-0808">Transferase</keyword>
<organism>
    <name type="scientific">Bacillus subtilis (strain 168)</name>
    <dbReference type="NCBI Taxonomy" id="224308"/>
    <lineage>
        <taxon>Bacteria</taxon>
        <taxon>Bacillati</taxon>
        <taxon>Bacillota</taxon>
        <taxon>Bacilli</taxon>
        <taxon>Bacillales</taxon>
        <taxon>Bacillaceae</taxon>
        <taxon>Bacillus</taxon>
    </lineage>
</organism>
<reference key="1">
    <citation type="journal article" date="1996" name="Microbiology">
        <title>Integrated mapping and sequencing of a 115 kb DNA fragment from Bacillus subtilis: sequence analysis of a 21 kb segment containing the sigL locus.</title>
        <authorList>
            <person name="Fabret C."/>
            <person name="Quentin Y."/>
            <person name="Chapal N."/>
            <person name="Guiseppi A."/>
            <person name="Haiech J."/>
            <person name="Denizot F."/>
        </authorList>
    </citation>
    <scope>NUCLEOTIDE SEQUENCE [GENOMIC DNA]</scope>
    <source>
        <strain>168</strain>
    </source>
</reference>
<reference key="2">
    <citation type="submission" date="1997-04" db="EMBL/GenBank/DDBJ databases">
        <authorList>
            <person name="Denizot F."/>
        </authorList>
    </citation>
    <scope>NUCLEOTIDE SEQUENCE [GENOMIC DNA]</scope>
    <source>
        <strain>168</strain>
    </source>
</reference>
<reference key="3">
    <citation type="journal article" date="1997" name="Nature">
        <title>The complete genome sequence of the Gram-positive bacterium Bacillus subtilis.</title>
        <authorList>
            <person name="Kunst F."/>
            <person name="Ogasawara N."/>
            <person name="Moszer I."/>
            <person name="Albertini A.M."/>
            <person name="Alloni G."/>
            <person name="Azevedo V."/>
            <person name="Bertero M.G."/>
            <person name="Bessieres P."/>
            <person name="Bolotin A."/>
            <person name="Borchert S."/>
            <person name="Borriss R."/>
            <person name="Boursier L."/>
            <person name="Brans A."/>
            <person name="Braun M."/>
            <person name="Brignell S.C."/>
            <person name="Bron S."/>
            <person name="Brouillet S."/>
            <person name="Bruschi C.V."/>
            <person name="Caldwell B."/>
            <person name="Capuano V."/>
            <person name="Carter N.M."/>
            <person name="Choi S.-K."/>
            <person name="Codani J.-J."/>
            <person name="Connerton I.F."/>
            <person name="Cummings N.J."/>
            <person name="Daniel R.A."/>
            <person name="Denizot F."/>
            <person name="Devine K.M."/>
            <person name="Duesterhoeft A."/>
            <person name="Ehrlich S.D."/>
            <person name="Emmerson P.T."/>
            <person name="Entian K.-D."/>
            <person name="Errington J."/>
            <person name="Fabret C."/>
            <person name="Ferrari E."/>
            <person name="Foulger D."/>
            <person name="Fritz C."/>
            <person name="Fujita M."/>
            <person name="Fujita Y."/>
            <person name="Fuma S."/>
            <person name="Galizzi A."/>
            <person name="Galleron N."/>
            <person name="Ghim S.-Y."/>
            <person name="Glaser P."/>
            <person name="Goffeau A."/>
            <person name="Golightly E.J."/>
            <person name="Grandi G."/>
            <person name="Guiseppi G."/>
            <person name="Guy B.J."/>
            <person name="Haga K."/>
            <person name="Haiech J."/>
            <person name="Harwood C.R."/>
            <person name="Henaut A."/>
            <person name="Hilbert H."/>
            <person name="Holsappel S."/>
            <person name="Hosono S."/>
            <person name="Hullo M.-F."/>
            <person name="Itaya M."/>
            <person name="Jones L.-M."/>
            <person name="Joris B."/>
            <person name="Karamata D."/>
            <person name="Kasahara Y."/>
            <person name="Klaerr-Blanchard M."/>
            <person name="Klein C."/>
            <person name="Kobayashi Y."/>
            <person name="Koetter P."/>
            <person name="Koningstein G."/>
            <person name="Krogh S."/>
            <person name="Kumano M."/>
            <person name="Kurita K."/>
            <person name="Lapidus A."/>
            <person name="Lardinois S."/>
            <person name="Lauber J."/>
            <person name="Lazarevic V."/>
            <person name="Lee S.-M."/>
            <person name="Levine A."/>
            <person name="Liu H."/>
            <person name="Masuda S."/>
            <person name="Mauel C."/>
            <person name="Medigue C."/>
            <person name="Medina N."/>
            <person name="Mellado R.P."/>
            <person name="Mizuno M."/>
            <person name="Moestl D."/>
            <person name="Nakai S."/>
            <person name="Noback M."/>
            <person name="Noone D."/>
            <person name="O'Reilly M."/>
            <person name="Ogawa K."/>
            <person name="Ogiwara A."/>
            <person name="Oudega B."/>
            <person name="Park S.-H."/>
            <person name="Parro V."/>
            <person name="Pohl T.M."/>
            <person name="Portetelle D."/>
            <person name="Porwollik S."/>
            <person name="Prescott A.M."/>
            <person name="Presecan E."/>
            <person name="Pujic P."/>
            <person name="Purnelle B."/>
            <person name="Rapoport G."/>
            <person name="Rey M."/>
            <person name="Reynolds S."/>
            <person name="Rieger M."/>
            <person name="Rivolta C."/>
            <person name="Rocha E."/>
            <person name="Roche B."/>
            <person name="Rose M."/>
            <person name="Sadaie Y."/>
            <person name="Sato T."/>
            <person name="Scanlan E."/>
            <person name="Schleich S."/>
            <person name="Schroeter R."/>
            <person name="Scoffone F."/>
            <person name="Sekiguchi J."/>
            <person name="Sekowska A."/>
            <person name="Seror S.J."/>
            <person name="Serror P."/>
            <person name="Shin B.-S."/>
            <person name="Soldo B."/>
            <person name="Sorokin A."/>
            <person name="Tacconi E."/>
            <person name="Takagi T."/>
            <person name="Takahashi H."/>
            <person name="Takemaru K."/>
            <person name="Takeuchi M."/>
            <person name="Tamakoshi A."/>
            <person name="Tanaka T."/>
            <person name="Terpstra P."/>
            <person name="Tognoni A."/>
            <person name="Tosato V."/>
            <person name="Uchiyama S."/>
            <person name="Vandenbol M."/>
            <person name="Vannier F."/>
            <person name="Vassarotti A."/>
            <person name="Viari A."/>
            <person name="Wambutt R."/>
            <person name="Wedler E."/>
            <person name="Wedler H."/>
            <person name="Weitzenegger T."/>
            <person name="Winters P."/>
            <person name="Wipat A."/>
            <person name="Yamamoto H."/>
            <person name="Yamane K."/>
            <person name="Yasumoto K."/>
            <person name="Yata K."/>
            <person name="Yoshida K."/>
            <person name="Yoshikawa H.-F."/>
            <person name="Zumstein E."/>
            <person name="Yoshikawa H."/>
            <person name="Danchin A."/>
        </authorList>
    </citation>
    <scope>NUCLEOTIDE SEQUENCE [LARGE SCALE GENOMIC DNA]</scope>
    <source>
        <strain>168</strain>
    </source>
</reference>
<reference key="4">
    <citation type="journal article" date="2005" name="Mol. Microbiol.">
        <title>A master regulator for biofilm formation by Bacillus subtilis.</title>
        <authorList>
            <person name="Kearns D.B."/>
            <person name="Chu F."/>
            <person name="Branda S.S."/>
            <person name="Kolter R."/>
            <person name="Losick R."/>
        </authorList>
    </citation>
    <scope>PROBABLE FUNCTION</scope>
    <scope>INDUCTION</scope>
</reference>
<accession>P71059</accession>
<accession>O08178</accession>
<accession>Q795I8</accession>
<dbReference type="EC" id="2.4.-.-"/>
<dbReference type="EMBL" id="Z71928">
    <property type="protein sequence ID" value="CAA96477.1"/>
    <property type="molecule type" value="Genomic_DNA"/>
</dbReference>
<dbReference type="EMBL" id="Z94043">
    <property type="protein sequence ID" value="CAB08032.1"/>
    <property type="molecule type" value="Genomic_DNA"/>
</dbReference>
<dbReference type="EMBL" id="AL009126">
    <property type="protein sequence ID" value="CAB15433.1"/>
    <property type="molecule type" value="Genomic_DNA"/>
</dbReference>
<dbReference type="PIR" id="A70037">
    <property type="entry name" value="A70037"/>
</dbReference>
<dbReference type="RefSeq" id="NP_391308.1">
    <property type="nucleotide sequence ID" value="NC_000964.3"/>
</dbReference>
<dbReference type="RefSeq" id="WP_003228264.1">
    <property type="nucleotide sequence ID" value="NZ_OZ025638.1"/>
</dbReference>
<dbReference type="SMR" id="P71059"/>
<dbReference type="FunCoup" id="P71059">
    <property type="interactions" value="138"/>
</dbReference>
<dbReference type="STRING" id="224308.BSU34280"/>
<dbReference type="CAZy" id="GT2">
    <property type="family name" value="Glycosyltransferase Family 2"/>
</dbReference>
<dbReference type="PaxDb" id="224308-BSU34280"/>
<dbReference type="DNASU" id="937131"/>
<dbReference type="EnsemblBacteria" id="CAB15433">
    <property type="protein sequence ID" value="CAB15433"/>
    <property type="gene ID" value="BSU_34280"/>
</dbReference>
<dbReference type="GeneID" id="937131"/>
<dbReference type="KEGG" id="bsu:BSU34280"/>
<dbReference type="PATRIC" id="fig|224308.179.peg.3714"/>
<dbReference type="eggNOG" id="COG1216">
    <property type="taxonomic scope" value="Bacteria"/>
</dbReference>
<dbReference type="InParanoid" id="P71059"/>
<dbReference type="OrthoDB" id="396512at2"/>
<dbReference type="PhylomeDB" id="P71059"/>
<dbReference type="BioCyc" id="BSUB:BSU34280-MONOMER"/>
<dbReference type="Proteomes" id="UP000001570">
    <property type="component" value="Chromosome"/>
</dbReference>
<dbReference type="GO" id="GO:0016757">
    <property type="term" value="F:glycosyltransferase activity"/>
    <property type="evidence" value="ECO:0007669"/>
    <property type="project" value="UniProtKB-KW"/>
</dbReference>
<dbReference type="GO" id="GO:0000271">
    <property type="term" value="P:polysaccharide biosynthetic process"/>
    <property type="evidence" value="ECO:0007669"/>
    <property type="project" value="UniProtKB-KW"/>
</dbReference>
<dbReference type="CDD" id="cd00761">
    <property type="entry name" value="Glyco_tranf_GTA_type"/>
    <property type="match status" value="1"/>
</dbReference>
<dbReference type="Gene3D" id="3.90.550.10">
    <property type="entry name" value="Spore Coat Polysaccharide Biosynthesis Protein SpsA, Chain A"/>
    <property type="match status" value="1"/>
</dbReference>
<dbReference type="InterPro" id="IPR001173">
    <property type="entry name" value="Glyco_trans_2-like"/>
</dbReference>
<dbReference type="InterPro" id="IPR029044">
    <property type="entry name" value="Nucleotide-diphossugar_trans"/>
</dbReference>
<dbReference type="PANTHER" id="PTHR22916">
    <property type="entry name" value="GLYCOSYLTRANSFERASE"/>
    <property type="match status" value="1"/>
</dbReference>
<dbReference type="PANTHER" id="PTHR22916:SF51">
    <property type="entry name" value="GLYCOSYLTRANSFERASE EPSH-RELATED"/>
    <property type="match status" value="1"/>
</dbReference>
<dbReference type="Pfam" id="PF00535">
    <property type="entry name" value="Glycos_transf_2"/>
    <property type="match status" value="1"/>
</dbReference>
<dbReference type="SUPFAM" id="SSF53448">
    <property type="entry name" value="Nucleotide-diphospho-sugar transferases"/>
    <property type="match status" value="1"/>
</dbReference>
<sequence>MIPLVSIIVPMYNVEPFIEECIDSLLRQTLSDIEIILVNDGTPDRSGEIAEDYAKRDARIRVIHQANGGLSSARNTGIKAARGTYIGFVDGDDYVSSAMFQRLTEEAEQNQLDIVGCGFYKQSSDRRTYVPPQLEANRVLTKPEMTEQLKHAHETRFIWYVWRYLYRRELFERANLLFDEDIRFAEDSPFNLSAFREAERVKMLDEGLYIYRENPNSLTEIPYKPAMDEHLQKQYQAKIAFYNHYGLAGACKEDLNVYICRHQLPMLLANACASPNSPKDIKKKIRQILSYDMVRQAVRHTPFQHEKLLRGERLVLALCKWRLTFLIKLFFEQRGTMKGSAKQA</sequence>
<name>EPSJ_BACSU</name>
<proteinExistence type="evidence at transcript level"/>
<evidence type="ECO:0000269" key="1">
    <source>
    </source>
</evidence>
<evidence type="ECO:0000305" key="2"/>
<gene>
    <name type="primary">epsJ</name>
    <name type="synonym">yveT</name>
    <name type="ordered locus">BSU34280</name>
</gene>
<feature type="chain" id="PRO_0000360830" description="Uncharacterized glycosyltransferase EpsJ">
    <location>
        <begin position="1"/>
        <end position="344"/>
    </location>
</feature>
<protein>
    <recommendedName>
        <fullName>Uncharacterized glycosyltransferase EpsJ</fullName>
        <ecNumber>2.4.-.-</ecNumber>
    </recommendedName>
</protein>
<comment type="function">
    <text>May be involved in the production of the exopolysaccharide (EPS) component of the extracellular matrix during biofilm formation. EPS is responsible for the adhesion of chains of cells into bundles.</text>
</comment>
<comment type="induction">
    <text evidence="1">Repressed by SinR.</text>
</comment>
<comment type="similarity">
    <text evidence="2">Belongs to the glycosyltransferase 2 family.</text>
</comment>